<protein>
    <recommendedName>
        <fullName>DNA repair protein RAD51 homolog B</fullName>
    </recommendedName>
    <alternativeName>
        <fullName>Rad51-like protein B</fullName>
        <shortName>RAD51B</shortName>
    </alternativeName>
    <alternativeName>
        <fullName>ZmRAD51b</fullName>
    </alternativeName>
</protein>
<organism>
    <name type="scientific">Zea mays</name>
    <name type="common">Maize</name>
    <dbReference type="NCBI Taxonomy" id="4577"/>
    <lineage>
        <taxon>Eukaryota</taxon>
        <taxon>Viridiplantae</taxon>
        <taxon>Streptophyta</taxon>
        <taxon>Embryophyta</taxon>
        <taxon>Tracheophyta</taxon>
        <taxon>Spermatophyta</taxon>
        <taxon>Magnoliopsida</taxon>
        <taxon>Liliopsida</taxon>
        <taxon>Poales</taxon>
        <taxon>Poaceae</taxon>
        <taxon>PACMAD clade</taxon>
        <taxon>Panicoideae</taxon>
        <taxon>Andropogonodae</taxon>
        <taxon>Andropogoneae</taxon>
        <taxon>Tripsacinae</taxon>
        <taxon>Zea</taxon>
    </lineage>
</organism>
<comment type="function">
    <text evidence="1 4 6">Binds to single and double-stranded DNA and exhibits DNA-dependent ATPase activity. Unwinds duplex DNA (By similarity). Component of the meiotic recombination pathway. Seems to play a role in mediating chromosome homology search, chromosome pairing and synapsis at early stages and probably chromosome crossing-over at later stages in meiosis. Probably is involved in the repair of meiotic double strand breaks (DBSs) and in homologous recombination.</text>
</comment>
<comment type="subunit">
    <text evidence="1">Self-associates and may interact with XRCC3 homolog.</text>
</comment>
<comment type="subcellular location">
    <subcellularLocation>
        <location evidence="5">Nucleus</location>
    </subcellularLocation>
</comment>
<comment type="tissue specificity">
    <text evidence="4">Highly expressed in mitotic and meiotic tissues, but low levels in differentiated tissues.</text>
</comment>
<comment type="similarity">
    <text evidence="7">Belongs to the RecA family. RAD51 subfamily.</text>
</comment>
<evidence type="ECO:0000250" key="1"/>
<evidence type="ECO:0000255" key="2"/>
<evidence type="ECO:0000256" key="3">
    <source>
        <dbReference type="SAM" id="MobiDB-lite"/>
    </source>
</evidence>
<evidence type="ECO:0000269" key="4">
    <source>
    </source>
</evidence>
<evidence type="ECO:0000269" key="5">
    <source>
    </source>
</evidence>
<evidence type="ECO:0000269" key="6">
    <source>
    </source>
</evidence>
<evidence type="ECO:0000305" key="7"/>
<sequence>MSSSSAHQKASPPIEEEATEHGPFPIEQLQASGIAALDVKKLKDAGLCTVESVAYSPRKDLLQIKGISEAKVDKIIEAASKLVPLGFTSASQLHAQRLEIIQLTTGSRELDQILDGGIETGSITEMYGEFRSGKTQLCHTLCVTCQLPLDQGGGEGKALYIDAEGTFRPQRILQIADRFGLNGADVLENVAYARAYNTDHQSRLLLEAASMMVETRFALMVVDSATALYRTDFSGRGELSARQMHLAKFLRSLQKLADEFGVAVVITNQVVAQVDGAAMFAGPQIKPIGGNIMAHASTTRLFLRKGRGEERICKVISSPCLAEAEARFQISSEGVTDVKD</sequence>
<gene>
    <name type="primary">RAD51B</name>
</gene>
<accession>Q9XED7</accession>
<proteinExistence type="evidence at transcript level"/>
<keyword id="KW-0067">ATP-binding</keyword>
<keyword id="KW-0227">DNA damage</keyword>
<keyword id="KW-0233">DNA recombination</keyword>
<keyword id="KW-0234">DNA repair</keyword>
<keyword id="KW-0238">DNA-binding</keyword>
<keyword id="KW-0547">Nucleotide-binding</keyword>
<keyword id="KW-0539">Nucleus</keyword>
<keyword id="KW-1185">Reference proteome</keyword>
<feature type="chain" id="PRO_0000122929" description="DNA repair protein RAD51 homolog B">
    <location>
        <begin position="1"/>
        <end position="340"/>
    </location>
</feature>
<feature type="domain" description="HhH">
    <location>
        <begin position="49"/>
        <end position="78"/>
    </location>
</feature>
<feature type="region of interest" description="Disordered" evidence="3">
    <location>
        <begin position="1"/>
        <end position="22"/>
    </location>
</feature>
<feature type="binding site" evidence="2">
    <location>
        <begin position="128"/>
        <end position="135"/>
    </location>
    <ligand>
        <name>ATP</name>
        <dbReference type="ChEBI" id="CHEBI:30616"/>
    </ligand>
</feature>
<dbReference type="EMBL" id="AF079429">
    <property type="protein sequence ID" value="AAD32030.1"/>
    <property type="molecule type" value="mRNA"/>
</dbReference>
<dbReference type="RefSeq" id="NP_001104919.1">
    <property type="nucleotide sequence ID" value="NM_001111449.2"/>
</dbReference>
<dbReference type="SMR" id="Q9XED7"/>
<dbReference type="FunCoup" id="Q9XED7">
    <property type="interactions" value="1873"/>
</dbReference>
<dbReference type="STRING" id="4577.Q9XED7"/>
<dbReference type="PaxDb" id="4577-GRMZM2G084762_P01"/>
<dbReference type="EnsemblPlants" id="Zm00001eb138190_T001">
    <property type="protein sequence ID" value="Zm00001eb138190_P001"/>
    <property type="gene ID" value="Zm00001eb138190"/>
</dbReference>
<dbReference type="GeneID" id="541710"/>
<dbReference type="Gramene" id="Zm00001eb138190_T001">
    <property type="protein sequence ID" value="Zm00001eb138190_P001"/>
    <property type="gene ID" value="Zm00001eb138190"/>
</dbReference>
<dbReference type="KEGG" id="zma:541710"/>
<dbReference type="MaizeGDB" id="112974"/>
<dbReference type="eggNOG" id="KOG1433">
    <property type="taxonomic scope" value="Eukaryota"/>
</dbReference>
<dbReference type="HOGENOM" id="CLU_041732_0_2_1"/>
<dbReference type="InParanoid" id="Q9XED7"/>
<dbReference type="OMA" id="RAYNSNH"/>
<dbReference type="OrthoDB" id="10251254at2759"/>
<dbReference type="Proteomes" id="UP000007305">
    <property type="component" value="Chromosome 3"/>
</dbReference>
<dbReference type="ExpressionAtlas" id="Q9XED7">
    <property type="expression patterns" value="baseline and differential"/>
</dbReference>
<dbReference type="GO" id="GO:0000794">
    <property type="term" value="C:condensed nuclear chromosome"/>
    <property type="evidence" value="ECO:0000318"/>
    <property type="project" value="GO_Central"/>
</dbReference>
<dbReference type="GO" id="GO:0005524">
    <property type="term" value="F:ATP binding"/>
    <property type="evidence" value="ECO:0007669"/>
    <property type="project" value="UniProtKB-KW"/>
</dbReference>
<dbReference type="GO" id="GO:0016887">
    <property type="term" value="F:ATP hydrolysis activity"/>
    <property type="evidence" value="ECO:0007669"/>
    <property type="project" value="InterPro"/>
</dbReference>
<dbReference type="GO" id="GO:0008094">
    <property type="term" value="F:ATP-dependent activity, acting on DNA"/>
    <property type="evidence" value="ECO:0000318"/>
    <property type="project" value="GO_Central"/>
</dbReference>
<dbReference type="GO" id="GO:0140664">
    <property type="term" value="F:ATP-dependent DNA damage sensor activity"/>
    <property type="evidence" value="ECO:0007669"/>
    <property type="project" value="InterPro"/>
</dbReference>
<dbReference type="GO" id="GO:0000150">
    <property type="term" value="F:DNA strand exchange activity"/>
    <property type="evidence" value="ECO:0000318"/>
    <property type="project" value="GO_Central"/>
</dbReference>
<dbReference type="GO" id="GO:0003690">
    <property type="term" value="F:double-stranded DNA binding"/>
    <property type="evidence" value="ECO:0000318"/>
    <property type="project" value="GO_Central"/>
</dbReference>
<dbReference type="GO" id="GO:0003697">
    <property type="term" value="F:single-stranded DNA binding"/>
    <property type="evidence" value="ECO:0000318"/>
    <property type="project" value="GO_Central"/>
</dbReference>
<dbReference type="GO" id="GO:0070192">
    <property type="term" value="P:chromosome organization involved in meiotic cell cycle"/>
    <property type="evidence" value="ECO:0000318"/>
    <property type="project" value="GO_Central"/>
</dbReference>
<dbReference type="GO" id="GO:0000730">
    <property type="term" value="P:DNA recombinase assembly"/>
    <property type="evidence" value="ECO:0000318"/>
    <property type="project" value="GO_Central"/>
</dbReference>
<dbReference type="GO" id="GO:0042148">
    <property type="term" value="P:DNA strand invasion"/>
    <property type="evidence" value="ECO:0000318"/>
    <property type="project" value="GO_Central"/>
</dbReference>
<dbReference type="GO" id="GO:0006312">
    <property type="term" value="P:mitotic recombination"/>
    <property type="evidence" value="ECO:0000318"/>
    <property type="project" value="GO_Central"/>
</dbReference>
<dbReference type="GO" id="GO:1990426">
    <property type="term" value="P:mitotic recombination-dependent replication fork processing"/>
    <property type="evidence" value="ECO:0007669"/>
    <property type="project" value="InterPro"/>
</dbReference>
<dbReference type="GO" id="GO:0007131">
    <property type="term" value="P:reciprocal meiotic recombination"/>
    <property type="evidence" value="ECO:0000318"/>
    <property type="project" value="GO_Central"/>
</dbReference>
<dbReference type="CDD" id="cd19513">
    <property type="entry name" value="Rad51"/>
    <property type="match status" value="1"/>
</dbReference>
<dbReference type="FunFam" id="1.10.150.20:FF:000008">
    <property type="entry name" value="DNA repair protein RAD51 homolog"/>
    <property type="match status" value="1"/>
</dbReference>
<dbReference type="FunFam" id="3.40.50.300:FF:000092">
    <property type="entry name" value="DNA repair protein Rad51 homolog"/>
    <property type="match status" value="1"/>
</dbReference>
<dbReference type="Gene3D" id="1.10.150.20">
    <property type="entry name" value="5' to 3' exonuclease, C-terminal subdomain"/>
    <property type="match status" value="1"/>
</dbReference>
<dbReference type="Gene3D" id="3.40.50.300">
    <property type="entry name" value="P-loop containing nucleotide triphosphate hydrolases"/>
    <property type="match status" value="1"/>
</dbReference>
<dbReference type="InterPro" id="IPR003593">
    <property type="entry name" value="AAA+_ATPase"/>
</dbReference>
<dbReference type="InterPro" id="IPR011941">
    <property type="entry name" value="DNA_recomb/repair_Rad51"/>
</dbReference>
<dbReference type="InterPro" id="IPR013632">
    <property type="entry name" value="DNA_recomb/repair_Rad51_C"/>
</dbReference>
<dbReference type="InterPro" id="IPR016467">
    <property type="entry name" value="DNA_recomb/repair_RecA-like"/>
</dbReference>
<dbReference type="InterPro" id="IPR010995">
    <property type="entry name" value="DNA_repair_Rad51/TF_NusA_a-hlx"/>
</dbReference>
<dbReference type="InterPro" id="IPR027417">
    <property type="entry name" value="P-loop_NTPase"/>
</dbReference>
<dbReference type="InterPro" id="IPR020588">
    <property type="entry name" value="RecA_ATP-bd"/>
</dbReference>
<dbReference type="InterPro" id="IPR020587">
    <property type="entry name" value="RecA_monomer-monomer_interface"/>
</dbReference>
<dbReference type="NCBIfam" id="NF003301">
    <property type="entry name" value="PRK04301.1"/>
    <property type="match status" value="1"/>
</dbReference>
<dbReference type="NCBIfam" id="TIGR02239">
    <property type="entry name" value="recomb_RAD51"/>
    <property type="match status" value="1"/>
</dbReference>
<dbReference type="PANTHER" id="PTHR22942:SF39">
    <property type="entry name" value="DNA REPAIR PROTEIN RAD51 HOMOLOG 1"/>
    <property type="match status" value="1"/>
</dbReference>
<dbReference type="PANTHER" id="PTHR22942">
    <property type="entry name" value="RECA/RAD51/RADA DNA STRAND-PAIRING FAMILY MEMBER"/>
    <property type="match status" value="1"/>
</dbReference>
<dbReference type="Pfam" id="PF14520">
    <property type="entry name" value="HHH_5"/>
    <property type="match status" value="1"/>
</dbReference>
<dbReference type="Pfam" id="PF08423">
    <property type="entry name" value="Rad51"/>
    <property type="match status" value="1"/>
</dbReference>
<dbReference type="PIRSF" id="PIRSF005856">
    <property type="entry name" value="Rad51"/>
    <property type="match status" value="1"/>
</dbReference>
<dbReference type="SMART" id="SM00382">
    <property type="entry name" value="AAA"/>
    <property type="match status" value="1"/>
</dbReference>
<dbReference type="SUPFAM" id="SSF52540">
    <property type="entry name" value="P-loop containing nucleoside triphosphate hydrolases"/>
    <property type="match status" value="1"/>
</dbReference>
<dbReference type="SUPFAM" id="SSF47794">
    <property type="entry name" value="Rad51 N-terminal domain-like"/>
    <property type="match status" value="1"/>
</dbReference>
<dbReference type="PROSITE" id="PS50162">
    <property type="entry name" value="RECA_2"/>
    <property type="match status" value="1"/>
</dbReference>
<dbReference type="PROSITE" id="PS50163">
    <property type="entry name" value="RECA_3"/>
    <property type="match status" value="1"/>
</dbReference>
<name>R51A2_MAIZE</name>
<reference key="1">
    <citation type="journal article" date="1999" name="Plant Cell">
        <title>Three-dimensional microscopy of the Rad51 recombination protein during meiotic prophase.</title>
        <authorList>
            <person name="Franklin A.E."/>
            <person name="McElver J."/>
            <person name="Sunjevaric I."/>
            <person name="Rothstein R."/>
            <person name="Bowen B."/>
            <person name="Cande W.Z."/>
        </authorList>
    </citation>
    <scope>NUCLEOTIDE SEQUENCE [MRNA]</scope>
    <scope>FUNCTION</scope>
    <scope>TISSUE SPECIFICITY</scope>
    <source>
        <strain>cv. A632</strain>
    </source>
</reference>
<reference key="2">
    <citation type="journal article" date="2003" name="Plant Cell">
        <title>Altered nuclear distribution of recombination protein RAD51 in maize mutants suggests the involvement of RAD51 in meiotic homology recognition.</title>
        <authorList>
            <person name="Pawlowski W.P."/>
            <person name="Golubovskaya I.N."/>
            <person name="Cande W.Z."/>
        </authorList>
    </citation>
    <scope>FUNCTION</scope>
</reference>
<reference key="3">
    <citation type="journal article" date="2003" name="Chromosoma">
        <title>Improper chromosome synapsis is associated with elongated RAD51 structures in the maize desynaptic2 mutant.</title>
        <authorList>
            <person name="Franklin A.E."/>
            <person name="Golubovskaya I.N."/>
            <person name="Bass H.W."/>
            <person name="Cande W.Z."/>
        </authorList>
    </citation>
    <scope>SUBCELLULAR LOCATION</scope>
</reference>